<organism>
    <name type="scientific">Chlamydia trachomatis</name>
    <dbReference type="NCBI Taxonomy" id="813"/>
    <lineage>
        <taxon>Bacteria</taxon>
        <taxon>Pseudomonadati</taxon>
        <taxon>Chlamydiota</taxon>
        <taxon>Chlamydiia</taxon>
        <taxon>Chlamydiales</taxon>
        <taxon>Chlamydiaceae</taxon>
        <taxon>Chlamydia/Chlamydophila group</taxon>
        <taxon>Chlamydia</taxon>
    </lineage>
</organism>
<evidence type="ECO:0000255" key="1">
    <source>
        <dbReference type="PROSITE-ProRule" id="PRU01246"/>
    </source>
</evidence>
<evidence type="ECO:0000255" key="2">
    <source>
        <dbReference type="PROSITE-ProRule" id="PRU01248"/>
    </source>
</evidence>
<evidence type="ECO:0000305" key="3"/>
<accession>P0CE20</accession>
<accession>P08788</accession>
<accession>P10554</accession>
<sequence>MGKGILSLQQEMSLEYSEKSYQEVLKIRQESYWKRMKSFSLFEVIMHWTASLNKHTCRSYRGSFLSLEKIGLLSLDMNLQEFSLLNHNLILDAIKKVSSAKTSWTEGTKQVRAASYISLTRFLNRMTQGIVAIAQPSKQENSRTFFKTREIVKTDAMNSLQTASFLKELKKINARDWLIAQTMLQGGKRSSEVLSLEISQICFQQATISFSQLKNRQTEKRIIITYPQKFMHFLQEYIGQRRGFVFVTRSGKMVGLRQIARTFSQAGLQAAIPFKITPHVLRATAVTEYKRLGCSDSDIMKVTGHATAKMIFAYDKSSREDNASKKMALI</sequence>
<keyword id="KW-0229">DNA integration</keyword>
<keyword id="KW-0233">DNA recombination</keyword>
<keyword id="KW-0238">DNA-binding</keyword>
<keyword id="KW-0614">Plasmid</keyword>
<keyword id="KW-1179">Viral genome integration</keyword>
<keyword id="KW-1160">Virus entry into host cell</keyword>
<reference key="1">
    <citation type="journal article" date="1988" name="Nucleic Acids Res.">
        <title>Analysis of the entire nucleotide sequence of the cryptic plasmid of Chlamydia trachomatis serovar L1. Evidence for involvement in DNA replication.</title>
        <authorList>
            <person name="Hatt C."/>
            <person name="Ward M.E."/>
            <person name="Clarke I.N."/>
        </authorList>
    </citation>
    <scope>NUCLEOTIDE SEQUENCE [GENOMIC DNA]</scope>
    <source>
        <strain>L1/440/LN</strain>
        <plasmid>pLGV440</plasmid>
    </source>
</reference>
<reference key="2">
    <citation type="submission" date="1994-04" db="EMBL/GenBank/DDBJ databases">
        <authorList>
            <person name="Hatt C."/>
        </authorList>
    </citation>
    <scope>SEQUENCE REVISION</scope>
</reference>
<reference key="3">
    <citation type="journal article" date="1990" name="Plasmid">
        <title>Diversity of the Chlamydia trachomatis common plasmid in biovars with different pathogenicity.</title>
        <authorList>
            <person name="Comanducci M."/>
            <person name="Ricci S."/>
            <person name="Cevenini R."/>
            <person name="Ratti G."/>
        </authorList>
    </citation>
    <scope>NUCLEOTIDE SEQUENCE [GENOMIC DNA]</scope>
    <source>
        <strain>D/GO/86</strain>
        <plasmid>pCHL1</plasmid>
    </source>
</reference>
<reference key="4">
    <citation type="journal article" date="1993" name="Mol. Gen. Genet.">
        <title>Transcriptional analysis of the Chlamydia trachomatis plasmid pCT identifies temporally regulated transcripts, anti-sense RNA and sigma 70-selected promoters.</title>
        <authorList>
            <person name="Ricci S."/>
            <person name="Cevenini R."/>
            <person name="Cosco E."/>
            <person name="Comanducci M."/>
            <person name="Ratti G."/>
            <person name="Scarlato V."/>
        </authorList>
    </citation>
    <scope>NUCLEOTIDE SEQUENCE [GENOMIC DNA]</scope>
    <source>
        <plasmid>pCHL1</plasmid>
    </source>
</reference>
<name>GP8D_CHLTH</name>
<comment type="miscellaneous">
    <text>pGP8-D is required for growth within mammalian cells.</text>
</comment>
<comment type="similarity">
    <text evidence="3">Belongs to the 'phage' integrase family.</text>
</comment>
<protein>
    <recommendedName>
        <fullName>Virulence plasmid integrase pGP8-D</fullName>
    </recommendedName>
    <alternativeName>
        <fullName>Protein N-1/N-2</fullName>
    </alternativeName>
</protein>
<dbReference type="EMBL" id="X07547">
    <property type="protein sequence ID" value="CAA30420.1"/>
    <property type="molecule type" value="Genomic_DNA"/>
</dbReference>
<dbReference type="EMBL" id="X06707">
    <property type="protein sequence ID" value="CAA29891.2"/>
    <property type="molecule type" value="Genomic_DNA"/>
</dbReference>
<dbReference type="EMBL" id="J03321">
    <property type="protein sequence ID" value="AAA91568.1"/>
    <property type="molecule type" value="Genomic_DNA"/>
</dbReference>
<dbReference type="PIR" id="H37386">
    <property type="entry name" value="H37386"/>
</dbReference>
<dbReference type="PIR" id="S01181">
    <property type="entry name" value="S01181"/>
</dbReference>
<dbReference type="RefSeq" id="NP_040381.1">
    <property type="nucleotide sequence ID" value="NC_001372.1"/>
</dbReference>
<dbReference type="RefSeq" id="WP_010889883.1">
    <property type="nucleotide sequence ID" value="NZ_CVNX01000004.1"/>
</dbReference>
<dbReference type="RefSeq" id="YP_001569035.2">
    <property type="nucleotide sequence ID" value="NC_010029.2"/>
</dbReference>
<dbReference type="RefSeq" id="YP_001654085.1">
    <property type="nucleotide sequence ID" value="NC_010286.1"/>
</dbReference>
<dbReference type="RefSeq" id="YP_002842023.1">
    <property type="nucleotide sequence ID" value="NC_012625.1"/>
</dbReference>
<dbReference type="RefSeq" id="YP_002842031.1">
    <property type="nucleotide sequence ID" value="NC_012626.1"/>
</dbReference>
<dbReference type="RefSeq" id="YP_002842039.1">
    <property type="nucleotide sequence ID" value="NC_012627.1"/>
</dbReference>
<dbReference type="SMR" id="P0CE20"/>
<dbReference type="OMA" id="SEAIFIW"/>
<dbReference type="GO" id="GO:0003677">
    <property type="term" value="F:DNA binding"/>
    <property type="evidence" value="ECO:0007669"/>
    <property type="project" value="UniProtKB-KW"/>
</dbReference>
<dbReference type="GO" id="GO:0015074">
    <property type="term" value="P:DNA integration"/>
    <property type="evidence" value="ECO:0007669"/>
    <property type="project" value="UniProtKB-KW"/>
</dbReference>
<dbReference type="GO" id="GO:0006310">
    <property type="term" value="P:DNA recombination"/>
    <property type="evidence" value="ECO:0007669"/>
    <property type="project" value="UniProtKB-KW"/>
</dbReference>
<dbReference type="GO" id="GO:0075713">
    <property type="term" value="P:establishment of integrated proviral latency"/>
    <property type="evidence" value="ECO:0007669"/>
    <property type="project" value="UniProtKB-KW"/>
</dbReference>
<dbReference type="GO" id="GO:0046718">
    <property type="term" value="P:symbiont entry into host cell"/>
    <property type="evidence" value="ECO:0007669"/>
    <property type="project" value="UniProtKB-KW"/>
</dbReference>
<dbReference type="GO" id="GO:0044826">
    <property type="term" value="P:viral genome integration into host DNA"/>
    <property type="evidence" value="ECO:0007669"/>
    <property type="project" value="UniProtKB-KW"/>
</dbReference>
<dbReference type="CDD" id="cd00397">
    <property type="entry name" value="DNA_BRE_C"/>
    <property type="match status" value="1"/>
</dbReference>
<dbReference type="Gene3D" id="1.10.443.10">
    <property type="entry name" value="Intergrase catalytic core"/>
    <property type="match status" value="1"/>
</dbReference>
<dbReference type="InterPro" id="IPR044068">
    <property type="entry name" value="CB"/>
</dbReference>
<dbReference type="InterPro" id="IPR011010">
    <property type="entry name" value="DNA_brk_join_enz"/>
</dbReference>
<dbReference type="InterPro" id="IPR013762">
    <property type="entry name" value="Integrase-like_cat_sf"/>
</dbReference>
<dbReference type="InterPro" id="IPR002104">
    <property type="entry name" value="Integrase_catalytic"/>
</dbReference>
<dbReference type="Pfam" id="PF00589">
    <property type="entry name" value="Phage_integrase"/>
    <property type="match status" value="1"/>
</dbReference>
<dbReference type="SUPFAM" id="SSF56349">
    <property type="entry name" value="DNA breaking-rejoining enzymes"/>
    <property type="match status" value="1"/>
</dbReference>
<dbReference type="PROSITE" id="PS51900">
    <property type="entry name" value="CB"/>
    <property type="match status" value="1"/>
</dbReference>
<dbReference type="PROSITE" id="PS51898">
    <property type="entry name" value="TYR_RECOMBINASE"/>
    <property type="match status" value="1"/>
</dbReference>
<geneLocation type="plasmid">
    <name>pLGV440</name>
</geneLocation>
<geneLocation type="plasmid">
    <name>pCHL1</name>
</geneLocation>
<feature type="chain" id="PRO_0000197566" description="Virulence plasmid integrase pGP8-D">
    <location>
        <begin position="1"/>
        <end position="330"/>
    </location>
</feature>
<feature type="domain" description="Core-binding (CB)" evidence="2">
    <location>
        <begin position="39"/>
        <end position="124"/>
    </location>
</feature>
<feature type="domain" description="Tyr recombinase" evidence="1">
    <location>
        <begin position="152"/>
        <end position="327"/>
    </location>
</feature>
<feature type="active site" evidence="1">
    <location>
        <position position="189"/>
    </location>
</feature>
<feature type="active site" evidence="1">
    <location>
        <position position="214"/>
    </location>
</feature>
<feature type="active site" evidence="1">
    <location>
        <position position="279"/>
    </location>
</feature>
<feature type="active site" evidence="1">
    <location>
        <position position="282"/>
    </location>
</feature>
<feature type="active site" evidence="1">
    <location>
        <position position="305"/>
    </location>
</feature>
<feature type="active site" description="O-(3'-phospho-DNA)-tyrosine intermediate" evidence="1">
    <location>
        <position position="314"/>
    </location>
</feature>
<proteinExistence type="inferred from homology"/>